<dbReference type="EC" id="2.1.1.190" evidence="1"/>
<dbReference type="EMBL" id="AE008922">
    <property type="protein sequence ID" value="AAM40575.1"/>
    <property type="molecule type" value="Genomic_DNA"/>
</dbReference>
<dbReference type="RefSeq" id="NP_636651.1">
    <property type="nucleotide sequence ID" value="NC_003902.1"/>
</dbReference>
<dbReference type="RefSeq" id="WP_011036471.1">
    <property type="nucleotide sequence ID" value="NC_003902.1"/>
</dbReference>
<dbReference type="SMR" id="Q8PB48"/>
<dbReference type="STRING" id="190485.XCC1277"/>
<dbReference type="EnsemblBacteria" id="AAM40575">
    <property type="protein sequence ID" value="AAM40575"/>
    <property type="gene ID" value="XCC1277"/>
</dbReference>
<dbReference type="KEGG" id="xcc:XCC1277"/>
<dbReference type="PATRIC" id="fig|190485.4.peg.1367"/>
<dbReference type="eggNOG" id="COG2265">
    <property type="taxonomic scope" value="Bacteria"/>
</dbReference>
<dbReference type="HOGENOM" id="CLU_014689_8_2_6"/>
<dbReference type="OrthoDB" id="9804590at2"/>
<dbReference type="Proteomes" id="UP000001010">
    <property type="component" value="Chromosome"/>
</dbReference>
<dbReference type="GO" id="GO:0051539">
    <property type="term" value="F:4 iron, 4 sulfur cluster binding"/>
    <property type="evidence" value="ECO:0007669"/>
    <property type="project" value="UniProtKB-KW"/>
</dbReference>
<dbReference type="GO" id="GO:0005506">
    <property type="term" value="F:iron ion binding"/>
    <property type="evidence" value="ECO:0007669"/>
    <property type="project" value="UniProtKB-UniRule"/>
</dbReference>
<dbReference type="GO" id="GO:0003723">
    <property type="term" value="F:RNA binding"/>
    <property type="evidence" value="ECO:0007669"/>
    <property type="project" value="InterPro"/>
</dbReference>
<dbReference type="GO" id="GO:0070041">
    <property type="term" value="F:rRNA (uridine-C5-)-methyltransferase activity"/>
    <property type="evidence" value="ECO:0000318"/>
    <property type="project" value="GO_Central"/>
</dbReference>
<dbReference type="GO" id="GO:0070475">
    <property type="term" value="P:rRNA base methylation"/>
    <property type="evidence" value="ECO:0000318"/>
    <property type="project" value="GO_Central"/>
</dbReference>
<dbReference type="CDD" id="cd02440">
    <property type="entry name" value="AdoMet_MTases"/>
    <property type="match status" value="1"/>
</dbReference>
<dbReference type="FunFam" id="3.40.50.150:FF:000009">
    <property type="entry name" value="23S rRNA (Uracil(1939)-C(5))-methyltransferase RlmD"/>
    <property type="match status" value="1"/>
</dbReference>
<dbReference type="FunFam" id="2.40.50.1070:FF:000006">
    <property type="entry name" value="23S rRNA (uracil(1939)-C(5))-methyltransferase RlmD"/>
    <property type="match status" value="1"/>
</dbReference>
<dbReference type="FunFam" id="2.40.50.140:FF:000097">
    <property type="entry name" value="23S rRNA (uracil(1939)-C(5))-methyltransferase RlmD"/>
    <property type="match status" value="1"/>
</dbReference>
<dbReference type="Gene3D" id="2.40.50.1070">
    <property type="match status" value="1"/>
</dbReference>
<dbReference type="Gene3D" id="2.40.50.140">
    <property type="entry name" value="Nucleic acid-binding proteins"/>
    <property type="match status" value="1"/>
</dbReference>
<dbReference type="Gene3D" id="3.40.50.150">
    <property type="entry name" value="Vaccinia Virus protein VP39"/>
    <property type="match status" value="1"/>
</dbReference>
<dbReference type="HAMAP" id="MF_01010">
    <property type="entry name" value="23SrRNA_methyltr_RlmD"/>
    <property type="match status" value="1"/>
</dbReference>
<dbReference type="InterPro" id="IPR001566">
    <property type="entry name" value="23S_rRNA_MeTrfase_RlmD"/>
</dbReference>
<dbReference type="InterPro" id="IPR030390">
    <property type="entry name" value="MeTrfase_TrmA_AS"/>
</dbReference>
<dbReference type="InterPro" id="IPR030391">
    <property type="entry name" value="MeTrfase_TrmA_CS"/>
</dbReference>
<dbReference type="InterPro" id="IPR012340">
    <property type="entry name" value="NA-bd_OB-fold"/>
</dbReference>
<dbReference type="InterPro" id="IPR029063">
    <property type="entry name" value="SAM-dependent_MTases_sf"/>
</dbReference>
<dbReference type="InterPro" id="IPR002792">
    <property type="entry name" value="TRAM_dom"/>
</dbReference>
<dbReference type="InterPro" id="IPR010280">
    <property type="entry name" value="U5_MeTrfase_fam"/>
</dbReference>
<dbReference type="NCBIfam" id="NF009639">
    <property type="entry name" value="PRK13168.1"/>
    <property type="match status" value="1"/>
</dbReference>
<dbReference type="NCBIfam" id="TIGR00479">
    <property type="entry name" value="rumA"/>
    <property type="match status" value="1"/>
</dbReference>
<dbReference type="PANTHER" id="PTHR11061:SF49">
    <property type="entry name" value="23S RRNA (URACIL(1939)-C(5))-METHYLTRANSFERASE RLMD"/>
    <property type="match status" value="1"/>
</dbReference>
<dbReference type="PANTHER" id="PTHR11061">
    <property type="entry name" value="RNA M5U METHYLTRANSFERASE"/>
    <property type="match status" value="1"/>
</dbReference>
<dbReference type="Pfam" id="PF01938">
    <property type="entry name" value="TRAM"/>
    <property type="match status" value="1"/>
</dbReference>
<dbReference type="Pfam" id="PF05958">
    <property type="entry name" value="tRNA_U5-meth_tr"/>
    <property type="match status" value="1"/>
</dbReference>
<dbReference type="SUPFAM" id="SSF50249">
    <property type="entry name" value="Nucleic acid-binding proteins"/>
    <property type="match status" value="1"/>
</dbReference>
<dbReference type="SUPFAM" id="SSF53335">
    <property type="entry name" value="S-adenosyl-L-methionine-dependent methyltransferases"/>
    <property type="match status" value="1"/>
</dbReference>
<dbReference type="PROSITE" id="PS51687">
    <property type="entry name" value="SAM_MT_RNA_M5U"/>
    <property type="match status" value="1"/>
</dbReference>
<dbReference type="PROSITE" id="PS50926">
    <property type="entry name" value="TRAM"/>
    <property type="match status" value="1"/>
</dbReference>
<dbReference type="PROSITE" id="PS01230">
    <property type="entry name" value="TRMA_1"/>
    <property type="match status" value="1"/>
</dbReference>
<dbReference type="PROSITE" id="PS01231">
    <property type="entry name" value="TRMA_2"/>
    <property type="match status" value="1"/>
</dbReference>
<evidence type="ECO:0000255" key="1">
    <source>
        <dbReference type="HAMAP-Rule" id="MF_01010"/>
    </source>
</evidence>
<name>RLMD_XANCP</name>
<organism>
    <name type="scientific">Xanthomonas campestris pv. campestris (strain ATCC 33913 / DSM 3586 / NCPPB 528 / LMG 568 / P 25)</name>
    <dbReference type="NCBI Taxonomy" id="190485"/>
    <lineage>
        <taxon>Bacteria</taxon>
        <taxon>Pseudomonadati</taxon>
        <taxon>Pseudomonadota</taxon>
        <taxon>Gammaproteobacteria</taxon>
        <taxon>Lysobacterales</taxon>
        <taxon>Lysobacteraceae</taxon>
        <taxon>Xanthomonas</taxon>
    </lineage>
</organism>
<gene>
    <name evidence="1" type="primary">rlmD</name>
    <name type="synonym">rumA</name>
    <name type="ordered locus">XCC1277</name>
</gene>
<protein>
    <recommendedName>
        <fullName evidence="1">23S rRNA (uracil(1939)-C(5))-methyltransferase RlmD</fullName>
        <ecNumber evidence="1">2.1.1.190</ecNumber>
    </recommendedName>
    <alternativeName>
        <fullName evidence="1">23S rRNA(m5U1939)-methyltransferase</fullName>
    </alternativeName>
</protein>
<accession>Q8PB48</accession>
<sequence length="444" mass="49272">MARSRNRFDRTPFQTAITDLSHDGRGVARRDGEGGKVTFISGALPGEVVVAEPTARSRHFDEAKTVEVLQASPQRVAPRCPHFGVCAGCVLQHLEESQQIVAKQRVLMDNLERIGHVTPQTVLPALVGDTWGYRRKGRFSVRRVEKKDKTLVGFRELDPRFVADLSVCYTVIPQIGEKIPQLAALVEGMDGKRDIPQIEFIAGDDAVALTIRHLQPLSARDEQALVEFAQAHDFAIFLQPGGVDSVHPLWPQEVPLSFRLPKWDVELAFRPLDFIQVNASLNQKMIAHALALLDAKPDDRVLDLFCGLGNFTLPLARTVREVVGVEGDAGLVARARENAQRNGLDNAQFYAADLTQDQRQTAWMRQGFDKLLLDPPRSGAIDVLQQLPLKQFKRIVYVSCHPGSLARDAGYLVNEQGFSLLSAGAMDMFPHTAHVESIAVFEKR</sequence>
<keyword id="KW-0004">4Fe-4S</keyword>
<keyword id="KW-0408">Iron</keyword>
<keyword id="KW-0411">Iron-sulfur</keyword>
<keyword id="KW-0479">Metal-binding</keyword>
<keyword id="KW-0489">Methyltransferase</keyword>
<keyword id="KW-1185">Reference proteome</keyword>
<keyword id="KW-0698">rRNA processing</keyword>
<keyword id="KW-0949">S-adenosyl-L-methionine</keyword>
<keyword id="KW-0808">Transferase</keyword>
<feature type="chain" id="PRO_0000161922" description="23S rRNA (uracil(1939)-C(5))-methyltransferase RlmD">
    <location>
        <begin position="1"/>
        <end position="444"/>
    </location>
</feature>
<feature type="domain" description="TRAM" evidence="1">
    <location>
        <begin position="5"/>
        <end position="67"/>
    </location>
</feature>
<feature type="active site" description="Nucleophile" evidence="1">
    <location>
        <position position="400"/>
    </location>
</feature>
<feature type="binding site" evidence="1">
    <location>
        <position position="80"/>
    </location>
    <ligand>
        <name>[4Fe-4S] cluster</name>
        <dbReference type="ChEBI" id="CHEBI:49883"/>
    </ligand>
</feature>
<feature type="binding site" evidence="1">
    <location>
        <position position="86"/>
    </location>
    <ligand>
        <name>[4Fe-4S] cluster</name>
        <dbReference type="ChEBI" id="CHEBI:49883"/>
    </ligand>
</feature>
<feature type="binding site" evidence="1">
    <location>
        <position position="89"/>
    </location>
    <ligand>
        <name>[4Fe-4S] cluster</name>
        <dbReference type="ChEBI" id="CHEBI:49883"/>
    </ligand>
</feature>
<feature type="binding site" evidence="1">
    <location>
        <position position="168"/>
    </location>
    <ligand>
        <name>[4Fe-4S] cluster</name>
        <dbReference type="ChEBI" id="CHEBI:49883"/>
    </ligand>
</feature>
<feature type="binding site" evidence="1">
    <location>
        <position position="276"/>
    </location>
    <ligand>
        <name>S-adenosyl-L-methionine</name>
        <dbReference type="ChEBI" id="CHEBI:59789"/>
    </ligand>
</feature>
<feature type="binding site" evidence="1">
    <location>
        <position position="305"/>
    </location>
    <ligand>
        <name>S-adenosyl-L-methionine</name>
        <dbReference type="ChEBI" id="CHEBI:59789"/>
    </ligand>
</feature>
<feature type="binding site" evidence="1">
    <location>
        <position position="310"/>
    </location>
    <ligand>
        <name>S-adenosyl-L-methionine</name>
        <dbReference type="ChEBI" id="CHEBI:59789"/>
    </ligand>
</feature>
<feature type="binding site" evidence="1">
    <location>
        <position position="326"/>
    </location>
    <ligand>
        <name>S-adenosyl-L-methionine</name>
        <dbReference type="ChEBI" id="CHEBI:59789"/>
    </ligand>
</feature>
<feature type="binding site" evidence="1">
    <location>
        <position position="353"/>
    </location>
    <ligand>
        <name>S-adenosyl-L-methionine</name>
        <dbReference type="ChEBI" id="CHEBI:59789"/>
    </ligand>
</feature>
<feature type="binding site" evidence="1">
    <location>
        <position position="374"/>
    </location>
    <ligand>
        <name>S-adenosyl-L-methionine</name>
        <dbReference type="ChEBI" id="CHEBI:59789"/>
    </ligand>
</feature>
<comment type="function">
    <text evidence="1">Catalyzes the formation of 5-methyl-uridine at position 1939 (m5U1939) in 23S rRNA.</text>
</comment>
<comment type="catalytic activity">
    <reaction evidence="1">
        <text>uridine(1939) in 23S rRNA + S-adenosyl-L-methionine = 5-methyluridine(1939) in 23S rRNA + S-adenosyl-L-homocysteine + H(+)</text>
        <dbReference type="Rhea" id="RHEA:42908"/>
        <dbReference type="Rhea" id="RHEA-COMP:10278"/>
        <dbReference type="Rhea" id="RHEA-COMP:10279"/>
        <dbReference type="ChEBI" id="CHEBI:15378"/>
        <dbReference type="ChEBI" id="CHEBI:57856"/>
        <dbReference type="ChEBI" id="CHEBI:59789"/>
        <dbReference type="ChEBI" id="CHEBI:65315"/>
        <dbReference type="ChEBI" id="CHEBI:74447"/>
        <dbReference type="EC" id="2.1.1.190"/>
    </reaction>
</comment>
<comment type="similarity">
    <text evidence="1">Belongs to the class I-like SAM-binding methyltransferase superfamily. RNA M5U methyltransferase family. RlmD subfamily.</text>
</comment>
<reference key="1">
    <citation type="journal article" date="2002" name="Nature">
        <title>Comparison of the genomes of two Xanthomonas pathogens with differing host specificities.</title>
        <authorList>
            <person name="da Silva A.C.R."/>
            <person name="Ferro J.A."/>
            <person name="Reinach F.C."/>
            <person name="Farah C.S."/>
            <person name="Furlan L.R."/>
            <person name="Quaggio R.B."/>
            <person name="Monteiro-Vitorello C.B."/>
            <person name="Van Sluys M.A."/>
            <person name="Almeida N.F. Jr."/>
            <person name="Alves L.M.C."/>
            <person name="do Amaral A.M."/>
            <person name="Bertolini M.C."/>
            <person name="Camargo L.E.A."/>
            <person name="Camarotte G."/>
            <person name="Cannavan F."/>
            <person name="Cardozo J."/>
            <person name="Chambergo F."/>
            <person name="Ciapina L.P."/>
            <person name="Cicarelli R.M.B."/>
            <person name="Coutinho L.L."/>
            <person name="Cursino-Santos J.R."/>
            <person name="El-Dorry H."/>
            <person name="Faria J.B."/>
            <person name="Ferreira A.J.S."/>
            <person name="Ferreira R.C.C."/>
            <person name="Ferro M.I.T."/>
            <person name="Formighieri E.F."/>
            <person name="Franco M.C."/>
            <person name="Greggio C.C."/>
            <person name="Gruber A."/>
            <person name="Katsuyama A.M."/>
            <person name="Kishi L.T."/>
            <person name="Leite R.P."/>
            <person name="Lemos E.G.M."/>
            <person name="Lemos M.V.F."/>
            <person name="Locali E.C."/>
            <person name="Machado M.A."/>
            <person name="Madeira A.M.B.N."/>
            <person name="Martinez-Rossi N.M."/>
            <person name="Martins E.C."/>
            <person name="Meidanis J."/>
            <person name="Menck C.F.M."/>
            <person name="Miyaki C.Y."/>
            <person name="Moon D.H."/>
            <person name="Moreira L.M."/>
            <person name="Novo M.T.M."/>
            <person name="Okura V.K."/>
            <person name="Oliveira M.C."/>
            <person name="Oliveira V.R."/>
            <person name="Pereira H.A."/>
            <person name="Rossi A."/>
            <person name="Sena J.A.D."/>
            <person name="Silva C."/>
            <person name="de Souza R.F."/>
            <person name="Spinola L.A.F."/>
            <person name="Takita M.A."/>
            <person name="Tamura R.E."/>
            <person name="Teixeira E.C."/>
            <person name="Tezza R.I.D."/>
            <person name="Trindade dos Santos M."/>
            <person name="Truffi D."/>
            <person name="Tsai S.M."/>
            <person name="White F.F."/>
            <person name="Setubal J.C."/>
            <person name="Kitajima J.P."/>
        </authorList>
    </citation>
    <scope>NUCLEOTIDE SEQUENCE [LARGE SCALE GENOMIC DNA]</scope>
    <source>
        <strain>ATCC 33913 / DSM 3586 / NCPPB 528 / LMG 568 / P 25</strain>
    </source>
</reference>
<proteinExistence type="inferred from homology"/>